<proteinExistence type="predicted"/>
<organism>
    <name type="scientific">Treponema pallidum (strain Nichols)</name>
    <dbReference type="NCBI Taxonomy" id="243276"/>
    <lineage>
        <taxon>Bacteria</taxon>
        <taxon>Pseudomonadati</taxon>
        <taxon>Spirochaetota</taxon>
        <taxon>Spirochaetia</taxon>
        <taxon>Spirochaetales</taxon>
        <taxon>Treponemataceae</taxon>
        <taxon>Treponema</taxon>
    </lineage>
</organism>
<gene>
    <name type="ordered locus">TP_0811</name>
</gene>
<accession>O83788</accession>
<reference key="1">
    <citation type="journal article" date="1998" name="Science">
        <title>Complete genome sequence of Treponema pallidum, the syphilis spirochete.</title>
        <authorList>
            <person name="Fraser C.M."/>
            <person name="Norris S.J."/>
            <person name="Weinstock G.M."/>
            <person name="White O."/>
            <person name="Sutton G.G."/>
            <person name="Dodson R.J."/>
            <person name="Gwinn M.L."/>
            <person name="Hickey E.K."/>
            <person name="Clayton R.A."/>
            <person name="Ketchum K.A."/>
            <person name="Sodergren E."/>
            <person name="Hardham J.M."/>
            <person name="McLeod M.P."/>
            <person name="Salzberg S.L."/>
            <person name="Peterson J.D."/>
            <person name="Khalak H.G."/>
            <person name="Richardson D.L."/>
            <person name="Howell J.K."/>
            <person name="Chidambaram M."/>
            <person name="Utterback T.R."/>
            <person name="McDonald L.A."/>
            <person name="Artiach P."/>
            <person name="Bowman C."/>
            <person name="Cotton M.D."/>
            <person name="Fujii C."/>
            <person name="Garland S.A."/>
            <person name="Hatch B."/>
            <person name="Horst K."/>
            <person name="Roberts K.M."/>
            <person name="Sandusky M."/>
            <person name="Weidman J.F."/>
            <person name="Smith H.O."/>
            <person name="Venter J.C."/>
        </authorList>
    </citation>
    <scope>NUCLEOTIDE SEQUENCE [LARGE SCALE GENOMIC DNA]</scope>
    <source>
        <strain>Nichols</strain>
    </source>
</reference>
<protein>
    <recommendedName>
        <fullName>Uncharacterized protein TP_0811</fullName>
    </recommendedName>
</protein>
<sequence length="41" mass="4658">MAGIVSAFVTFFYRFISFTTSYVQCVRSIIAEHAGPHGWFL</sequence>
<dbReference type="EMBL" id="AE000520">
    <property type="protein sequence ID" value="AAC65784.1"/>
    <property type="molecule type" value="Genomic_DNA"/>
</dbReference>
<dbReference type="PIR" id="A71278">
    <property type="entry name" value="A71278"/>
</dbReference>
<dbReference type="EnsemblBacteria" id="AAC65784">
    <property type="protein sequence ID" value="AAC65784"/>
    <property type="gene ID" value="TP_0811"/>
</dbReference>
<dbReference type="KEGG" id="tpa:TP_0811"/>
<dbReference type="HOGENOM" id="CLU_3278194_0_0_12"/>
<dbReference type="Proteomes" id="UP000000811">
    <property type="component" value="Chromosome"/>
</dbReference>
<name>Y811_TREPA</name>
<feature type="chain" id="PRO_0000202331" description="Uncharacterized protein TP_0811">
    <location>
        <begin position="1"/>
        <end position="41"/>
    </location>
</feature>
<keyword id="KW-1185">Reference proteome</keyword>